<accession>B2GUB3</accession>
<proteinExistence type="evidence at protein level"/>
<sequence length="830" mass="92974">MAHHTAVNPDRLKHAKALVEKAIKQKKIFAIHGPYPVIRSCLRSRGWVEKKFPKSGKAKQKKEKASDEDMEDDDGDGSSNDDDDGENSDEEENGDPDGTCDLMSRLLRNEDPNFFWTTKRDAVDCRFLKKDQMLNHYAKAGSFTTKVGLCLNLRNLHWFDDADPDSFFPRCYRLGAEDEKQSFKEDFWHTAARSILKRVANRRDICSPAATGGAKASHREPGANNGAQLLAKRGSRKRAESVPVQIILTALEACERYLNSLEHNDIDMETEATPAMTDTQWEEFLHGYYQVIHDGATIEHSEYYVDQCSEVLHKLEAVNPQLDIEGGRNIWIVKPGAKSRGRGIICMDRLEEILKLVDCDPMIVKDGKWVVQKYIERPLLIFGTKFDVRQWFLVTDWNPLTIWFYKECYVRFSSQPFSLENLDTSIHLCNNSIQKHYENSQSRHPLVPTDNMWSSRQLQVHLHKLGAPHAWEAVIVPGMKAAIIHAMQSAQDIVEYRKSSFELYGADFMFGENFHPWLIEINASPTMAASTTVTSRLCAEVQEDTLRIVLDRKLDRNCDIGAFELIYKQCAVDIPQYLGINLLVEGSMVKKPRQLQQPNPNGAFNLSIVQSNKRSVSLLNAKTSGSNPGVGSQDSVKVAVPTRTAPAVMGNDFWTSRTHGTIGRAKTTAAGKENKAAEGGQRNSVMVELVRLPSKRALEQSKEGTNPRQRLFPAPKSCTLEKPIRVRQPIRLKNGGFVDLKFTSLDSGQVQLLRNMKTGMTDPNKMPCLFCKGPSSLTGLHAMCSCSRAGKQAAKPTCLKLSKRIIIGKFHGSSAALSARGTAILTSLLP</sequence>
<comment type="function">
    <text evidence="1 5">Monoglycylase which modifies alpha- and beta-tubulin, adding a single glycine on the gamma-carboxyl groups of specific glutamate residues to generate monoglycine side chains within the C-terminal tail of tubulin. Not involved in elongation step of the polyglycylation reaction (PubMed:28576883). Preferentially glycylates a beta-tail peptide over the alpha-tail, although shifts its preference toward alpha-tail as beta-tail glutamylation increases (PubMed:28576883). Competes with polyglutamylases for modification site on beta-tubulin substrate, thereby creating an anticorrelation between glycylation and glutamylation reactions (PubMed:28576883). Together with TTLL8, mediates microtubule glycylation of primary and motile cilia, which is essential for their stability and maintenance (By similarity).</text>
</comment>
<comment type="catalytic activity">
    <reaction evidence="5">
        <text>L-glutamyl-[protein] + glycine + ATP = glycyl-L-glutamyl-[protein] + ADP + phosphate + H(+)</text>
        <dbReference type="Rhea" id="RHEA:67180"/>
        <dbReference type="Rhea" id="RHEA-COMP:10208"/>
        <dbReference type="Rhea" id="RHEA-COMP:17207"/>
        <dbReference type="ChEBI" id="CHEBI:15378"/>
        <dbReference type="ChEBI" id="CHEBI:29973"/>
        <dbReference type="ChEBI" id="CHEBI:30616"/>
        <dbReference type="ChEBI" id="CHEBI:43474"/>
        <dbReference type="ChEBI" id="CHEBI:57305"/>
        <dbReference type="ChEBI" id="CHEBI:167890"/>
        <dbReference type="ChEBI" id="CHEBI:456216"/>
    </reaction>
    <physiologicalReaction direction="left-to-right" evidence="7">
        <dbReference type="Rhea" id="RHEA:67181"/>
    </physiologicalReaction>
</comment>
<comment type="cofactor">
    <cofactor evidence="2">
        <name>Mg(2+)</name>
        <dbReference type="ChEBI" id="CHEBI:18420"/>
    </cofactor>
</comment>
<comment type="subcellular location">
    <subcellularLocation>
        <location evidence="5">Cytoplasm</location>
        <location evidence="5">Cytoskeleton</location>
    </subcellularLocation>
    <subcellularLocation>
        <location evidence="1">Cell projection</location>
        <location evidence="1">Cilium</location>
    </subcellularLocation>
    <subcellularLocation>
        <location evidence="1">Cytoplasm</location>
        <location evidence="1">Cytoskeleton</location>
        <location evidence="1">Cilium axoneme</location>
    </subcellularLocation>
    <subcellularLocation>
        <location evidence="1">Cytoplasm</location>
        <location evidence="1">Cytoskeleton</location>
        <location evidence="1">Flagellum axoneme</location>
    </subcellularLocation>
</comment>
<comment type="domain">
    <text evidence="5">Two conserved structural elements specific among monoglycylases, IS1 and IS2, are involved in glycyl chains initiation. Two conserved structural interfaces likely constitute the binding platforms for tubulin tail and microtubule.</text>
</comment>
<comment type="domain">
    <text evidence="2">Arg-340 is the main determinant for regioselectivity, which segregates between initiases and elongases in all tubulin--tyrosine ligase family. A glutamine residue at this position is found in elongases TTLL6, TTLL9, TTLL11, TTLL13, TTLL10 and favors glutamate-chain elongation, whereas an arginine residue is found in initiases TTLL2, TTLL4, TTLL5, TTLL3, TTLL8 and favors initiation.</text>
</comment>
<comment type="caution">
    <text evidence="1">TTLL3 and TTLL8 monoglycylase-mediated glycylation of tubulin was initially reported to play a role in ependymal motile ciliary maintenance (By similarity). However, contradictory results were later observed (By similarity).</text>
</comment>
<name>TTLL3_XENTR</name>
<dbReference type="EC" id="6.3.2.-" evidence="5"/>
<dbReference type="EMBL" id="AAMC04000004">
    <property type="status" value="NOT_ANNOTATED_CDS"/>
    <property type="molecule type" value="Genomic_DNA"/>
</dbReference>
<dbReference type="EMBL" id="BC166209">
    <property type="protein sequence ID" value="AAI66209.1"/>
    <property type="molecule type" value="mRNA"/>
</dbReference>
<dbReference type="PDB" id="5VLQ">
    <property type="method" value="X-ray"/>
    <property type="resolution" value="2.29 A"/>
    <property type="chains" value="A/B=6-569"/>
</dbReference>
<dbReference type="PDBsum" id="5VLQ"/>
<dbReference type="SMR" id="B2GUB3"/>
<dbReference type="FunCoup" id="B2GUB3">
    <property type="interactions" value="125"/>
</dbReference>
<dbReference type="KEGG" id="xtr:100158544"/>
<dbReference type="AGR" id="Xenbase:XB-GENE-5950142"/>
<dbReference type="CTD" id="100158544"/>
<dbReference type="Xenbase" id="XB-GENE-5950142">
    <property type="gene designation" value="XB5950141"/>
</dbReference>
<dbReference type="InParanoid" id="B2GUB3"/>
<dbReference type="OrthoDB" id="202825at2759"/>
<dbReference type="Proteomes" id="UP000008143">
    <property type="component" value="Chromosome 4"/>
</dbReference>
<dbReference type="GO" id="GO:0005737">
    <property type="term" value="C:cytoplasm"/>
    <property type="evidence" value="ECO:0007669"/>
    <property type="project" value="UniProtKB-KW"/>
</dbReference>
<dbReference type="GO" id="GO:0005874">
    <property type="term" value="C:microtubule"/>
    <property type="evidence" value="ECO:0007669"/>
    <property type="project" value="UniProtKB-KW"/>
</dbReference>
<dbReference type="GO" id="GO:0031514">
    <property type="term" value="C:motile cilium"/>
    <property type="evidence" value="ECO:0007669"/>
    <property type="project" value="UniProtKB-KW"/>
</dbReference>
<dbReference type="GO" id="GO:0005524">
    <property type="term" value="F:ATP binding"/>
    <property type="evidence" value="ECO:0007669"/>
    <property type="project" value="UniProtKB-KW"/>
</dbReference>
<dbReference type="GO" id="GO:0046872">
    <property type="term" value="F:metal ion binding"/>
    <property type="evidence" value="ECO:0007669"/>
    <property type="project" value="UniProtKB-KW"/>
</dbReference>
<dbReference type="GO" id="GO:0070736">
    <property type="term" value="F:protein-glycine ligase activity, initiating"/>
    <property type="evidence" value="ECO:0000314"/>
    <property type="project" value="UniProtKB"/>
</dbReference>
<dbReference type="GO" id="GO:0018094">
    <property type="term" value="P:protein polyglycylation"/>
    <property type="evidence" value="ECO:0000314"/>
    <property type="project" value="UniProtKB"/>
</dbReference>
<dbReference type="FunFam" id="3.30.470.20:FF:000032">
    <property type="entry name" value="tubulin monoglycylase TTLL3 isoform X2"/>
    <property type="match status" value="1"/>
</dbReference>
<dbReference type="Gene3D" id="3.30.470.20">
    <property type="entry name" value="ATP-grasp fold, B domain"/>
    <property type="match status" value="1"/>
</dbReference>
<dbReference type="InterPro" id="IPR004344">
    <property type="entry name" value="TTL/TTLL_fam"/>
</dbReference>
<dbReference type="InterPro" id="IPR051437">
    <property type="entry name" value="TTLL_monoglycylase"/>
</dbReference>
<dbReference type="PANTHER" id="PTHR45870">
    <property type="entry name" value="TUBULIN MONOGLYCYLASE TTLL3"/>
    <property type="match status" value="1"/>
</dbReference>
<dbReference type="PANTHER" id="PTHR45870:SF8">
    <property type="entry name" value="TUBULIN MONOGLYCYLASE TTLL3 ISOFORM X1"/>
    <property type="match status" value="1"/>
</dbReference>
<dbReference type="Pfam" id="PF03133">
    <property type="entry name" value="TTL"/>
    <property type="match status" value="1"/>
</dbReference>
<dbReference type="SUPFAM" id="SSF56059">
    <property type="entry name" value="Glutathione synthetase ATP-binding domain-like"/>
    <property type="match status" value="1"/>
</dbReference>
<dbReference type="PROSITE" id="PS51221">
    <property type="entry name" value="TTL"/>
    <property type="match status" value="1"/>
</dbReference>
<feature type="chain" id="PRO_0000453203" description="Tubulin tyrosine ligase 3">
    <location>
        <begin position="1"/>
        <end position="830"/>
    </location>
</feature>
<feature type="domain" description="TTL" evidence="3">
    <location>
        <begin position="211"/>
        <end position="561"/>
    </location>
</feature>
<feature type="region of interest" description="Disordered" evidence="4">
    <location>
        <begin position="52"/>
        <end position="102"/>
    </location>
</feature>
<feature type="compositionally biased region" description="Basic residues" evidence="4">
    <location>
        <begin position="53"/>
        <end position="62"/>
    </location>
</feature>
<feature type="compositionally biased region" description="Acidic residues" evidence="4">
    <location>
        <begin position="66"/>
        <end position="95"/>
    </location>
</feature>
<feature type="binding site" evidence="2">
    <location>
        <position position="334"/>
    </location>
    <ligand>
        <name>ATP</name>
        <dbReference type="ChEBI" id="CHEBI:30616"/>
    </ligand>
</feature>
<feature type="binding site" evidence="2">
    <location>
        <begin position="340"/>
        <end position="341"/>
    </location>
    <ligand>
        <name>ATP</name>
        <dbReference type="ChEBI" id="CHEBI:30616"/>
    </ligand>
</feature>
<feature type="binding site" evidence="2">
    <location>
        <position position="340"/>
    </location>
    <ligand>
        <name>a protein</name>
        <dbReference type="ChEBI" id="CHEBI:16541"/>
    </ligand>
    <ligandPart>
        <name>L-glutamate residue</name>
        <dbReference type="ChEBI" id="CHEBI:29973"/>
        <note>L-glutamate acceptor residue in protein target</note>
    </ligandPart>
</feature>
<feature type="binding site" evidence="5 8">
    <location>
        <begin position="372"/>
        <end position="375"/>
    </location>
    <ligand>
        <name>ATP</name>
        <dbReference type="ChEBI" id="CHEBI:30616"/>
    </ligand>
</feature>
<feature type="binding site" evidence="2">
    <location>
        <begin position="385"/>
        <end position="387"/>
    </location>
    <ligand>
        <name>ATP</name>
        <dbReference type="ChEBI" id="CHEBI:30616"/>
    </ligand>
</feature>
<feature type="binding site" evidence="2">
    <location>
        <begin position="429"/>
        <end position="430"/>
    </location>
    <ligand>
        <name>ATP</name>
        <dbReference type="ChEBI" id="CHEBI:30616"/>
    </ligand>
</feature>
<feature type="binding site" evidence="2">
    <location>
        <position position="432"/>
    </location>
    <ligand>
        <name>L-glutamate</name>
        <dbReference type="ChEBI" id="CHEBI:29985"/>
    </ligand>
</feature>
<feature type="binding site" evidence="2">
    <location>
        <position position="507"/>
    </location>
    <ligand>
        <name>Mg(2+)</name>
        <dbReference type="ChEBI" id="CHEBI:18420"/>
        <label>1</label>
    </ligand>
</feature>
<feature type="binding site" evidence="5 8">
    <location>
        <position position="520"/>
    </location>
    <ligand>
        <name>ATP</name>
        <dbReference type="ChEBI" id="CHEBI:30616"/>
    </ligand>
</feature>
<feature type="binding site" evidence="2">
    <location>
        <position position="520"/>
    </location>
    <ligand>
        <name>Mg(2+)</name>
        <dbReference type="ChEBI" id="CHEBI:18420"/>
        <label>1</label>
    </ligand>
</feature>
<feature type="binding site" evidence="2">
    <location>
        <position position="520"/>
    </location>
    <ligand>
        <name>Mg(2+)</name>
        <dbReference type="ChEBI" id="CHEBI:18420"/>
        <label>2</label>
    </ligand>
</feature>
<feature type="binding site" evidence="2">
    <location>
        <position position="522"/>
    </location>
    <ligand>
        <name>Mg(2+)</name>
        <dbReference type="ChEBI" id="CHEBI:18420"/>
        <label>2</label>
    </ligand>
</feature>
<feature type="site" description="Essential for specifying initiation versus elongation step of the polyglycylase activity" evidence="2">
    <location>
        <position position="340"/>
    </location>
</feature>
<feature type="mutagenesis site" description="Decreased monoglycylation activity; when associated with A-134." evidence="5">
    <original>K</original>
    <variation>A</variation>
    <location>
        <position position="16"/>
    </location>
</feature>
<feature type="mutagenesis site" description="Decreased monoglycylation activity; when associated with A-26." evidence="5">
    <original>K</original>
    <variation>A</variation>
    <location>
        <position position="24"/>
    </location>
</feature>
<feature type="mutagenesis site" description="Decreased monoglycylation activity; when associated with A-24." evidence="5">
    <original>K</original>
    <variation>A</variation>
    <location>
        <position position="26"/>
    </location>
</feature>
<feature type="mutagenesis site" description="Decreased monoglycylation activity." evidence="5">
    <original>K</original>
    <variation>E</variation>
    <location>
        <position position="119"/>
    </location>
</feature>
<feature type="mutagenesis site" description="Decreased monoglycylation activity." evidence="5">
    <original>R</original>
    <variation>E</variation>
    <location>
        <position position="126"/>
    </location>
</feature>
<feature type="mutagenesis site" description="Decreased monoglycylation activity." evidence="5">
    <original>K</original>
    <variation>E</variation>
    <location>
        <position position="130"/>
    </location>
</feature>
<feature type="mutagenesis site" description="Decreased monoglycylation activity; when associated with A-16." evidence="5">
    <original>L</original>
    <variation>A</variation>
    <location>
        <position position="134"/>
    </location>
</feature>
<feature type="mutagenesis site" description="Decreased monoglycylation activity." evidence="5">
    <original>K</original>
    <variation>E</variation>
    <location>
        <position position="139"/>
    </location>
</feature>
<feature type="mutagenesis site" description="Increased monoglycylation activity." evidence="5">
    <original>S</original>
    <variation>A</variation>
    <location>
        <position position="142"/>
    </location>
</feature>
<feature type="mutagenesis site" description="Decreased monoglycylation activity." evidence="5">
    <original>S</original>
    <variation>D</variation>
    <location>
        <position position="142"/>
    </location>
</feature>
<feature type="mutagenesis site" description="Decreased monoglycylation activity." evidence="5">
    <original>W</original>
    <variation>A</variation>
    <location>
        <position position="158"/>
    </location>
</feature>
<feature type="mutagenesis site" description="Decreased monoglycylation activity." evidence="5">
    <original>F</original>
    <variation>A</variation>
    <location>
        <position position="159"/>
    </location>
</feature>
<feature type="mutagenesis site" description="Decreased monoglycylation activity; when associated with N-267." evidence="5">
    <original>D</original>
    <variation>N</variation>
    <location>
        <position position="265"/>
    </location>
</feature>
<feature type="mutagenesis site" description="Decreased monoglycylation activity; when associated with N-265." evidence="5">
    <original>D</original>
    <variation>N</variation>
    <location>
        <position position="267"/>
    </location>
</feature>
<feature type="mutagenesis site" description="Decreased monoglycylation activity." evidence="5">
    <original>R</original>
    <variation>E</variation>
    <location>
        <position position="389"/>
    </location>
</feature>
<feature type="mutagenesis site" description="Decreased monoglycylation activity." evidence="5">
    <original>R</original>
    <variation>E</variation>
    <location>
        <position position="411"/>
    </location>
</feature>
<feature type="mutagenesis site" description="Decreased monoglycylation activity." evidence="5">
    <original>R</original>
    <variation>E</variation>
    <location>
        <position position="556"/>
    </location>
</feature>
<feature type="mutagenesis site" description="Decreased monoglycylation activity." evidence="5">
    <original>K</original>
    <variation>E</variation>
    <location>
        <position position="568"/>
    </location>
</feature>
<feature type="helix" evidence="9">
    <location>
        <begin position="11"/>
        <end position="24"/>
    </location>
</feature>
<feature type="strand" evidence="9">
    <location>
        <begin position="28"/>
        <end position="34"/>
    </location>
</feature>
<feature type="helix" evidence="9">
    <location>
        <begin position="36"/>
        <end position="44"/>
    </location>
</feature>
<feature type="helix" evidence="9">
    <location>
        <begin position="100"/>
        <end position="106"/>
    </location>
</feature>
<feature type="turn" evidence="9">
    <location>
        <begin position="107"/>
        <end position="109"/>
    </location>
</feature>
<feature type="strand" evidence="9">
    <location>
        <begin position="113"/>
        <end position="119"/>
    </location>
</feature>
<feature type="helix" evidence="9">
    <location>
        <begin position="120"/>
        <end position="122"/>
    </location>
</feature>
<feature type="helix" evidence="9">
    <location>
        <begin position="125"/>
        <end position="127"/>
    </location>
</feature>
<feature type="strand" evidence="9">
    <location>
        <begin position="133"/>
        <end position="136"/>
    </location>
</feature>
<feature type="helix" evidence="9">
    <location>
        <begin position="142"/>
        <end position="144"/>
    </location>
</feature>
<feature type="helix" evidence="9">
    <location>
        <begin position="146"/>
        <end position="154"/>
    </location>
</feature>
<feature type="helix" evidence="9">
    <location>
        <begin position="155"/>
        <end position="158"/>
    </location>
</feature>
<feature type="helix" evidence="9">
    <location>
        <begin position="164"/>
        <end position="166"/>
    </location>
</feature>
<feature type="helix" evidence="9">
    <location>
        <begin position="182"/>
        <end position="200"/>
    </location>
</feature>
<feature type="helix" evidence="9">
    <location>
        <begin position="245"/>
        <end position="257"/>
    </location>
</feature>
<feature type="helix" evidence="9">
    <location>
        <begin position="279"/>
        <end position="283"/>
    </location>
</feature>
<feature type="helix" evidence="9">
    <location>
        <begin position="285"/>
        <end position="292"/>
    </location>
</feature>
<feature type="helix" evidence="9">
    <location>
        <begin position="301"/>
        <end position="304"/>
    </location>
</feature>
<feature type="helix" evidence="9">
    <location>
        <begin position="305"/>
        <end position="318"/>
    </location>
</feature>
<feature type="turn" evidence="9">
    <location>
        <begin position="320"/>
        <end position="325"/>
    </location>
</feature>
<feature type="helix" evidence="9">
    <location>
        <begin position="350"/>
        <end position="355"/>
    </location>
</feature>
<feature type="strand" evidence="9">
    <location>
        <begin position="371"/>
        <end position="373"/>
    </location>
</feature>
<feature type="strand" evidence="9">
    <location>
        <begin position="376"/>
        <end position="378"/>
    </location>
</feature>
<feature type="strand" evidence="9">
    <location>
        <begin position="381"/>
        <end position="384"/>
    </location>
</feature>
<feature type="strand" evidence="9">
    <location>
        <begin position="386"/>
        <end position="396"/>
    </location>
</feature>
<feature type="turn" evidence="9">
    <location>
        <begin position="397"/>
        <end position="400"/>
    </location>
</feature>
<feature type="strand" evidence="9">
    <location>
        <begin position="401"/>
        <end position="406"/>
    </location>
</feature>
<feature type="strand" evidence="9">
    <location>
        <begin position="409"/>
        <end position="412"/>
    </location>
</feature>
<feature type="strand" evidence="9">
    <location>
        <begin position="451"/>
        <end position="454"/>
    </location>
</feature>
<feature type="helix" evidence="9">
    <location>
        <begin position="455"/>
        <end position="464"/>
    </location>
</feature>
<feature type="helix" evidence="9">
    <location>
        <begin position="470"/>
        <end position="473"/>
    </location>
</feature>
<feature type="helix" evidence="9">
    <location>
        <begin position="475"/>
        <end position="488"/>
    </location>
</feature>
<feature type="strand" evidence="9">
    <location>
        <begin position="502"/>
        <end position="511"/>
    </location>
</feature>
<feature type="strand" evidence="9">
    <location>
        <begin position="516"/>
        <end position="524"/>
    </location>
</feature>
<feature type="helix" evidence="9">
    <location>
        <begin position="532"/>
        <end position="549"/>
    </location>
</feature>
<feature type="helix" evidence="9">
    <location>
        <begin position="551"/>
        <end position="554"/>
    </location>
</feature>
<feature type="strand" evidence="9">
    <location>
        <begin position="563"/>
        <end position="568"/>
    </location>
</feature>
<evidence type="ECO:0000250" key="1">
    <source>
        <dbReference type="UniProtKB" id="A4Q9E5"/>
    </source>
</evidence>
<evidence type="ECO:0000250" key="2">
    <source>
        <dbReference type="UniProtKB" id="A4Q9E8"/>
    </source>
</evidence>
<evidence type="ECO:0000255" key="3">
    <source>
        <dbReference type="PROSITE-ProRule" id="PRU00568"/>
    </source>
</evidence>
<evidence type="ECO:0000256" key="4">
    <source>
        <dbReference type="SAM" id="MobiDB-lite"/>
    </source>
</evidence>
<evidence type="ECO:0000269" key="5">
    <source>
    </source>
</evidence>
<evidence type="ECO:0000303" key="6">
    <source>
    </source>
</evidence>
<evidence type="ECO:0000305" key="7">
    <source>
    </source>
</evidence>
<evidence type="ECO:0007744" key="8">
    <source>
        <dbReference type="PDB" id="5VLQ"/>
    </source>
</evidence>
<evidence type="ECO:0007829" key="9">
    <source>
        <dbReference type="PDB" id="5VLQ"/>
    </source>
</evidence>
<keyword id="KW-0002">3D-structure</keyword>
<keyword id="KW-0067">ATP-binding</keyword>
<keyword id="KW-0966">Cell projection</keyword>
<keyword id="KW-0969">Cilium</keyword>
<keyword id="KW-0963">Cytoplasm</keyword>
<keyword id="KW-0206">Cytoskeleton</keyword>
<keyword id="KW-0282">Flagellum</keyword>
<keyword id="KW-0436">Ligase</keyword>
<keyword id="KW-0460">Magnesium</keyword>
<keyword id="KW-0479">Metal-binding</keyword>
<keyword id="KW-0493">Microtubule</keyword>
<keyword id="KW-0547">Nucleotide-binding</keyword>
<keyword id="KW-1185">Reference proteome</keyword>
<protein>
    <recommendedName>
        <fullName evidence="6">Tubulin tyrosine ligase 3</fullName>
        <ecNumber evidence="5">6.3.2.-</ecNumber>
    </recommendedName>
    <alternativeName>
        <fullName evidence="1">Tubulin--tyrosine ligase protein 3</fullName>
    </alternativeName>
</protein>
<organism>
    <name type="scientific">Xenopus tropicalis</name>
    <name type="common">Western clawed frog</name>
    <name type="synonym">Silurana tropicalis</name>
    <dbReference type="NCBI Taxonomy" id="8364"/>
    <lineage>
        <taxon>Eukaryota</taxon>
        <taxon>Metazoa</taxon>
        <taxon>Chordata</taxon>
        <taxon>Craniata</taxon>
        <taxon>Vertebrata</taxon>
        <taxon>Euteleostomi</taxon>
        <taxon>Amphibia</taxon>
        <taxon>Batrachia</taxon>
        <taxon>Anura</taxon>
        <taxon>Pipoidea</taxon>
        <taxon>Pipidae</taxon>
        <taxon>Xenopodinae</taxon>
        <taxon>Xenopus</taxon>
        <taxon>Silurana</taxon>
    </lineage>
</organism>
<reference key="1">
    <citation type="journal article" date="2010" name="Science">
        <title>The genome of the Western clawed frog Xenopus tropicalis.</title>
        <authorList>
            <person name="Hellsten U."/>
            <person name="Harland R.M."/>
            <person name="Gilchrist M.J."/>
            <person name="Hendrix D."/>
            <person name="Jurka J."/>
            <person name="Kapitonov V."/>
            <person name="Ovcharenko I."/>
            <person name="Putnam N.H."/>
            <person name="Shu S."/>
            <person name="Taher L."/>
            <person name="Blitz I.L."/>
            <person name="Blumberg B."/>
            <person name="Dichmann D.S."/>
            <person name="Dubchak I."/>
            <person name="Amaya E."/>
            <person name="Detter J.C."/>
            <person name="Fletcher R."/>
            <person name="Gerhard D.S."/>
            <person name="Goodstein D."/>
            <person name="Graves T."/>
            <person name="Grigoriev I.V."/>
            <person name="Grimwood J."/>
            <person name="Kawashima T."/>
            <person name="Lindquist E."/>
            <person name="Lucas S.M."/>
            <person name="Mead P.E."/>
            <person name="Mitros T."/>
            <person name="Ogino H."/>
            <person name="Ohta Y."/>
            <person name="Poliakov A.V."/>
            <person name="Pollet N."/>
            <person name="Robert J."/>
            <person name="Salamov A."/>
            <person name="Sater A.K."/>
            <person name="Schmutz J."/>
            <person name="Terry A."/>
            <person name="Vize P.D."/>
            <person name="Warren W.C."/>
            <person name="Wells D."/>
            <person name="Wills A."/>
            <person name="Wilson R.K."/>
            <person name="Zimmerman L.B."/>
            <person name="Zorn A.M."/>
            <person name="Grainger R."/>
            <person name="Grammer T."/>
            <person name="Khokha M.K."/>
            <person name="Richardson P.M."/>
            <person name="Rokhsar D.S."/>
        </authorList>
    </citation>
    <scope>NUCLEOTIDE SEQUENCE [LARGE SCALE GENOMIC DNA]</scope>
</reference>
<reference key="2">
    <citation type="submission" date="2008-04" db="EMBL/GenBank/DDBJ databases">
        <authorList>
            <consortium name="NIH - Xenopus Gene Collection (XGC) project"/>
        </authorList>
    </citation>
    <scope>NUCLEOTIDE SEQUENCE [LARGE SCALE MRNA]</scope>
    <source>
        <tissue>Testis</tissue>
    </source>
</reference>
<reference key="3">
    <citation type="journal article" date="2017" name="Proc. Natl. Acad. Sci. U.S.A.">
        <title>Crystal structure of tubulin tyrosine ligase-like 3 reveals essential architectural elements unique to tubulin monoglycylases.</title>
        <authorList>
            <person name="Garnham C.P."/>
            <person name="Yu I."/>
            <person name="Li Y."/>
            <person name="Roll-Mecak A."/>
        </authorList>
    </citation>
    <scope>X-RAY CRYSTALLOGRAPHY (2.29 ANGSTROMS) OF 6-569 IN COMPLEX WITH ATP ANALOG</scope>
    <scope>FUNCTION</scope>
    <scope>CATALYTIC ACTIVITY</scope>
    <scope>MUTAGENESIS OF LYS-16; LYS-24; LYS-26; LYS-119; ARG-126; LYS-130; LEU-134; LYS-139; SER-142; TRP-158; PHE-159; ASP-265; ASP-267; ARG-389; ARG-411; ARG-556 AND LYS-568</scope>
</reference>
<gene>
    <name type="primary">ttll3</name>
</gene>